<keyword id="KW-1185">Reference proteome</keyword>
<keyword id="KW-0687">Ribonucleoprotein</keyword>
<keyword id="KW-0689">Ribosomal protein</keyword>
<keyword id="KW-0694">RNA-binding</keyword>
<keyword id="KW-0699">rRNA-binding</keyword>
<dbReference type="EMBL" id="CP000159">
    <property type="protein sequence ID" value="ABC46143.1"/>
    <property type="molecule type" value="Genomic_DNA"/>
</dbReference>
<dbReference type="RefSeq" id="WP_011403799.1">
    <property type="nucleotide sequence ID" value="NC_007677.1"/>
</dbReference>
<dbReference type="RefSeq" id="YP_445171.1">
    <property type="nucleotide sequence ID" value="NC_007677.1"/>
</dbReference>
<dbReference type="SMR" id="Q2S3R0"/>
<dbReference type="STRING" id="309807.SRU_1039"/>
<dbReference type="EnsemblBacteria" id="ABC46143">
    <property type="protein sequence ID" value="ABC46143"/>
    <property type="gene ID" value="SRU_1039"/>
</dbReference>
<dbReference type="GeneID" id="83727968"/>
<dbReference type="KEGG" id="sru:SRU_1039"/>
<dbReference type="PATRIC" id="fig|309807.25.peg.1077"/>
<dbReference type="eggNOG" id="COG0185">
    <property type="taxonomic scope" value="Bacteria"/>
</dbReference>
<dbReference type="HOGENOM" id="CLU_144911_0_1_10"/>
<dbReference type="OrthoDB" id="9797833at2"/>
<dbReference type="Proteomes" id="UP000008674">
    <property type="component" value="Chromosome"/>
</dbReference>
<dbReference type="GO" id="GO:0005737">
    <property type="term" value="C:cytoplasm"/>
    <property type="evidence" value="ECO:0007669"/>
    <property type="project" value="UniProtKB-ARBA"/>
</dbReference>
<dbReference type="GO" id="GO:0015935">
    <property type="term" value="C:small ribosomal subunit"/>
    <property type="evidence" value="ECO:0007669"/>
    <property type="project" value="InterPro"/>
</dbReference>
<dbReference type="GO" id="GO:0019843">
    <property type="term" value="F:rRNA binding"/>
    <property type="evidence" value="ECO:0007669"/>
    <property type="project" value="UniProtKB-UniRule"/>
</dbReference>
<dbReference type="GO" id="GO:0003735">
    <property type="term" value="F:structural constituent of ribosome"/>
    <property type="evidence" value="ECO:0007669"/>
    <property type="project" value="InterPro"/>
</dbReference>
<dbReference type="GO" id="GO:0000028">
    <property type="term" value="P:ribosomal small subunit assembly"/>
    <property type="evidence" value="ECO:0007669"/>
    <property type="project" value="TreeGrafter"/>
</dbReference>
<dbReference type="GO" id="GO:0006412">
    <property type="term" value="P:translation"/>
    <property type="evidence" value="ECO:0007669"/>
    <property type="project" value="UniProtKB-UniRule"/>
</dbReference>
<dbReference type="FunFam" id="3.30.860.10:FF:000001">
    <property type="entry name" value="30S ribosomal protein S19"/>
    <property type="match status" value="1"/>
</dbReference>
<dbReference type="Gene3D" id="3.30.860.10">
    <property type="entry name" value="30s Ribosomal Protein S19, Chain A"/>
    <property type="match status" value="1"/>
</dbReference>
<dbReference type="HAMAP" id="MF_00531">
    <property type="entry name" value="Ribosomal_uS19"/>
    <property type="match status" value="1"/>
</dbReference>
<dbReference type="InterPro" id="IPR002222">
    <property type="entry name" value="Ribosomal_uS19"/>
</dbReference>
<dbReference type="InterPro" id="IPR005732">
    <property type="entry name" value="Ribosomal_uS19_bac-type"/>
</dbReference>
<dbReference type="InterPro" id="IPR020934">
    <property type="entry name" value="Ribosomal_uS19_CS"/>
</dbReference>
<dbReference type="InterPro" id="IPR023575">
    <property type="entry name" value="Ribosomal_uS19_SF"/>
</dbReference>
<dbReference type="NCBIfam" id="TIGR01050">
    <property type="entry name" value="rpsS_bact"/>
    <property type="match status" value="1"/>
</dbReference>
<dbReference type="PANTHER" id="PTHR11880">
    <property type="entry name" value="RIBOSOMAL PROTEIN S19P FAMILY MEMBER"/>
    <property type="match status" value="1"/>
</dbReference>
<dbReference type="PANTHER" id="PTHR11880:SF8">
    <property type="entry name" value="SMALL RIBOSOMAL SUBUNIT PROTEIN US19M"/>
    <property type="match status" value="1"/>
</dbReference>
<dbReference type="Pfam" id="PF00203">
    <property type="entry name" value="Ribosomal_S19"/>
    <property type="match status" value="1"/>
</dbReference>
<dbReference type="PIRSF" id="PIRSF002144">
    <property type="entry name" value="Ribosomal_S19"/>
    <property type="match status" value="1"/>
</dbReference>
<dbReference type="PRINTS" id="PR00975">
    <property type="entry name" value="RIBOSOMALS19"/>
</dbReference>
<dbReference type="SUPFAM" id="SSF54570">
    <property type="entry name" value="Ribosomal protein S19"/>
    <property type="match status" value="1"/>
</dbReference>
<dbReference type="PROSITE" id="PS00323">
    <property type="entry name" value="RIBOSOMAL_S19"/>
    <property type="match status" value="1"/>
</dbReference>
<comment type="function">
    <text evidence="1">Protein S19 forms a complex with S13 that binds strongly to the 16S ribosomal RNA.</text>
</comment>
<comment type="similarity">
    <text evidence="1">Belongs to the universal ribosomal protein uS19 family.</text>
</comment>
<organism>
    <name type="scientific">Salinibacter ruber (strain DSM 13855 / M31)</name>
    <dbReference type="NCBI Taxonomy" id="309807"/>
    <lineage>
        <taxon>Bacteria</taxon>
        <taxon>Pseudomonadati</taxon>
        <taxon>Rhodothermota</taxon>
        <taxon>Rhodothermia</taxon>
        <taxon>Rhodothermales</taxon>
        <taxon>Salinibacteraceae</taxon>
        <taxon>Salinibacter</taxon>
    </lineage>
</organism>
<feature type="chain" id="PRO_0000265424" description="Small ribosomal subunit protein uS19">
    <location>
        <begin position="1"/>
        <end position="97"/>
    </location>
</feature>
<sequence>MPRSLRKGPYVYYKLQRKVDALNESDEKKVIKTWSRDSIITPDFVGHTFAVHNGHQFIPVYVTENMVGHKLGEFAPTRTFTEHSQAKVDQRIRKPGQ</sequence>
<proteinExistence type="inferred from homology"/>
<reference key="1">
    <citation type="journal article" date="2005" name="Proc. Natl. Acad. Sci. U.S.A.">
        <title>The genome of Salinibacter ruber: convergence and gene exchange among hyperhalophilic bacteria and archaea.</title>
        <authorList>
            <person name="Mongodin E.F."/>
            <person name="Nelson K.E."/>
            <person name="Daugherty S."/>
            <person name="DeBoy R.T."/>
            <person name="Wister J."/>
            <person name="Khouri H."/>
            <person name="Weidman J."/>
            <person name="Walsh D.A."/>
            <person name="Papke R.T."/>
            <person name="Sanchez Perez G."/>
            <person name="Sharma A.K."/>
            <person name="Nesbo C.L."/>
            <person name="MacLeod D."/>
            <person name="Bapteste E."/>
            <person name="Doolittle W.F."/>
            <person name="Charlebois R.L."/>
            <person name="Legault B."/>
            <person name="Rodriguez-Valera F."/>
        </authorList>
    </citation>
    <scope>NUCLEOTIDE SEQUENCE [LARGE SCALE GENOMIC DNA]</scope>
    <source>
        <strain>DSM 13855 / CECT 5946 / M31</strain>
    </source>
</reference>
<evidence type="ECO:0000255" key="1">
    <source>
        <dbReference type="HAMAP-Rule" id="MF_00531"/>
    </source>
</evidence>
<evidence type="ECO:0000305" key="2"/>
<protein>
    <recommendedName>
        <fullName evidence="1">Small ribosomal subunit protein uS19</fullName>
    </recommendedName>
    <alternativeName>
        <fullName evidence="2">30S ribosomal protein S19</fullName>
    </alternativeName>
</protein>
<gene>
    <name evidence="1" type="primary">rpsS</name>
    <name type="ordered locus">SRU_1039</name>
</gene>
<name>RS19_SALRD</name>
<accession>Q2S3R0</accession>